<gene>
    <name evidence="1" type="primary">rimP</name>
    <name type="ordered locus">PCC7424_2360</name>
</gene>
<organism>
    <name type="scientific">Gloeothece citriformis (strain PCC 7424)</name>
    <name type="common">Cyanothece sp. (strain PCC 7424)</name>
    <dbReference type="NCBI Taxonomy" id="65393"/>
    <lineage>
        <taxon>Bacteria</taxon>
        <taxon>Bacillati</taxon>
        <taxon>Cyanobacteriota</taxon>
        <taxon>Cyanophyceae</taxon>
        <taxon>Oscillatoriophycideae</taxon>
        <taxon>Chroococcales</taxon>
        <taxon>Aphanothecaceae</taxon>
        <taxon>Gloeothece</taxon>
        <taxon>Gloeothece citriformis</taxon>
    </lineage>
</organism>
<reference key="1">
    <citation type="journal article" date="2011" name="MBio">
        <title>Novel metabolic attributes of the genus Cyanothece, comprising a group of unicellular nitrogen-fixing Cyanobacteria.</title>
        <authorList>
            <person name="Bandyopadhyay A."/>
            <person name="Elvitigala T."/>
            <person name="Welsh E."/>
            <person name="Stockel J."/>
            <person name="Liberton M."/>
            <person name="Min H."/>
            <person name="Sherman L.A."/>
            <person name="Pakrasi H.B."/>
        </authorList>
    </citation>
    <scope>NUCLEOTIDE SEQUENCE [LARGE SCALE GENOMIC DNA]</scope>
    <source>
        <strain>PCC 7424</strain>
    </source>
</reference>
<comment type="function">
    <text evidence="1">Required for maturation of 30S ribosomal subunits.</text>
</comment>
<comment type="subcellular location">
    <subcellularLocation>
        <location evidence="1">Cytoplasm</location>
    </subcellularLocation>
</comment>
<comment type="similarity">
    <text evidence="1">Belongs to the RimP family.</text>
</comment>
<dbReference type="EMBL" id="CP001291">
    <property type="protein sequence ID" value="ACK70781.1"/>
    <property type="molecule type" value="Genomic_DNA"/>
</dbReference>
<dbReference type="RefSeq" id="WP_015954385.1">
    <property type="nucleotide sequence ID" value="NC_011729.1"/>
</dbReference>
<dbReference type="SMR" id="B7KIU5"/>
<dbReference type="STRING" id="65393.PCC7424_2360"/>
<dbReference type="KEGG" id="cyc:PCC7424_2360"/>
<dbReference type="eggNOG" id="COG0779">
    <property type="taxonomic scope" value="Bacteria"/>
</dbReference>
<dbReference type="HOGENOM" id="CLU_070525_2_1_3"/>
<dbReference type="OrthoDB" id="9805006at2"/>
<dbReference type="Proteomes" id="UP000002384">
    <property type="component" value="Chromosome"/>
</dbReference>
<dbReference type="GO" id="GO:0005829">
    <property type="term" value="C:cytosol"/>
    <property type="evidence" value="ECO:0007669"/>
    <property type="project" value="TreeGrafter"/>
</dbReference>
<dbReference type="GO" id="GO:0000028">
    <property type="term" value="P:ribosomal small subunit assembly"/>
    <property type="evidence" value="ECO:0007669"/>
    <property type="project" value="TreeGrafter"/>
</dbReference>
<dbReference type="GO" id="GO:0006412">
    <property type="term" value="P:translation"/>
    <property type="evidence" value="ECO:0007669"/>
    <property type="project" value="TreeGrafter"/>
</dbReference>
<dbReference type="CDD" id="cd01734">
    <property type="entry name" value="YlxS_C"/>
    <property type="match status" value="1"/>
</dbReference>
<dbReference type="FunFam" id="3.30.300.70:FF:000001">
    <property type="entry name" value="Ribosome maturation factor RimP"/>
    <property type="match status" value="1"/>
</dbReference>
<dbReference type="Gene3D" id="2.30.30.180">
    <property type="entry name" value="Ribosome maturation factor RimP, C-terminal domain"/>
    <property type="match status" value="1"/>
</dbReference>
<dbReference type="Gene3D" id="3.30.300.70">
    <property type="entry name" value="RimP-like superfamily, N-terminal"/>
    <property type="match status" value="1"/>
</dbReference>
<dbReference type="HAMAP" id="MF_01077">
    <property type="entry name" value="RimP"/>
    <property type="match status" value="1"/>
</dbReference>
<dbReference type="InterPro" id="IPR003728">
    <property type="entry name" value="Ribosome_maturation_RimP"/>
</dbReference>
<dbReference type="InterPro" id="IPR028998">
    <property type="entry name" value="RimP_C"/>
</dbReference>
<dbReference type="InterPro" id="IPR036847">
    <property type="entry name" value="RimP_C_sf"/>
</dbReference>
<dbReference type="InterPro" id="IPR028989">
    <property type="entry name" value="RimP_N"/>
</dbReference>
<dbReference type="InterPro" id="IPR035956">
    <property type="entry name" value="RimP_N_sf"/>
</dbReference>
<dbReference type="NCBIfam" id="NF000935">
    <property type="entry name" value="PRK00092.3-3"/>
    <property type="match status" value="1"/>
</dbReference>
<dbReference type="PANTHER" id="PTHR33867">
    <property type="entry name" value="RIBOSOME MATURATION FACTOR RIMP"/>
    <property type="match status" value="1"/>
</dbReference>
<dbReference type="PANTHER" id="PTHR33867:SF1">
    <property type="entry name" value="RIBOSOME MATURATION FACTOR RIMP"/>
    <property type="match status" value="1"/>
</dbReference>
<dbReference type="Pfam" id="PF17384">
    <property type="entry name" value="DUF150_C"/>
    <property type="match status" value="1"/>
</dbReference>
<dbReference type="Pfam" id="PF02576">
    <property type="entry name" value="RimP_N"/>
    <property type="match status" value="1"/>
</dbReference>
<dbReference type="SUPFAM" id="SSF74942">
    <property type="entry name" value="YhbC-like, C-terminal domain"/>
    <property type="match status" value="1"/>
</dbReference>
<dbReference type="SUPFAM" id="SSF75420">
    <property type="entry name" value="YhbC-like, N-terminal domain"/>
    <property type="match status" value="1"/>
</dbReference>
<feature type="chain" id="PRO_1000136755" description="Ribosome maturation factor RimP">
    <location>
        <begin position="1"/>
        <end position="155"/>
    </location>
</feature>
<accession>B7KIU5</accession>
<sequence length="155" mass="17495">MTHPLIPQIIDLATPIAEKLGLEIVEVVFQTNKRPPVLRLDIRNLSSDTGLDDCEQMSRSLEATLDATELIPGSYVLEISSPGISRQLTSDREFIAFKGFEVIVKTYTPYENQKEWRGNLQGRDEQAVYLNKKGRAIAIPRQLVAKVQLNDQRTT</sequence>
<proteinExistence type="inferred from homology"/>
<evidence type="ECO:0000255" key="1">
    <source>
        <dbReference type="HAMAP-Rule" id="MF_01077"/>
    </source>
</evidence>
<name>RIMP_GLOC7</name>
<keyword id="KW-0963">Cytoplasm</keyword>
<keyword id="KW-1185">Reference proteome</keyword>
<keyword id="KW-0690">Ribosome biogenesis</keyword>
<protein>
    <recommendedName>
        <fullName evidence="1">Ribosome maturation factor RimP</fullName>
    </recommendedName>
</protein>